<keyword id="KW-0963">Cytoplasm</keyword>
<keyword id="KW-0489">Methyltransferase</keyword>
<keyword id="KW-1185">Reference proteome</keyword>
<keyword id="KW-0698">rRNA processing</keyword>
<keyword id="KW-0949">S-adenosyl-L-methionine</keyword>
<keyword id="KW-0808">Transferase</keyword>
<evidence type="ECO:0000250" key="1"/>
<evidence type="ECO:0000305" key="2"/>
<proteinExistence type="inferred from homology"/>
<dbReference type="EC" id="2.1.1.193"/>
<dbReference type="EMBL" id="AE014075">
    <property type="protein sequence ID" value="AAN81980.1"/>
    <property type="status" value="ALT_INIT"/>
    <property type="molecule type" value="Genomic_DNA"/>
</dbReference>
<dbReference type="RefSeq" id="WP_001222509.1">
    <property type="nucleotide sequence ID" value="NZ_CP051263.1"/>
</dbReference>
<dbReference type="SMR" id="P0AGL8"/>
<dbReference type="STRING" id="199310.c3532"/>
<dbReference type="GeneID" id="75173052"/>
<dbReference type="KEGG" id="ecc:c3532"/>
<dbReference type="eggNOG" id="COG1385">
    <property type="taxonomic scope" value="Bacteria"/>
</dbReference>
<dbReference type="HOGENOM" id="CLU_067442_5_1_6"/>
<dbReference type="Proteomes" id="UP000001410">
    <property type="component" value="Chromosome"/>
</dbReference>
<dbReference type="GO" id="GO:0005737">
    <property type="term" value="C:cytoplasm"/>
    <property type="evidence" value="ECO:0007669"/>
    <property type="project" value="UniProtKB-SubCell"/>
</dbReference>
<dbReference type="GO" id="GO:0070042">
    <property type="term" value="F:rRNA (uridine-N3-)-methyltransferase activity"/>
    <property type="evidence" value="ECO:0007669"/>
    <property type="project" value="TreeGrafter"/>
</dbReference>
<dbReference type="GO" id="GO:0070475">
    <property type="term" value="P:rRNA base methylation"/>
    <property type="evidence" value="ECO:0007669"/>
    <property type="project" value="TreeGrafter"/>
</dbReference>
<dbReference type="CDD" id="cd18084">
    <property type="entry name" value="RsmE-like"/>
    <property type="match status" value="1"/>
</dbReference>
<dbReference type="FunFam" id="2.40.240.20:FF:000001">
    <property type="entry name" value="Ribosomal RNA small subunit methyltransferase E"/>
    <property type="match status" value="1"/>
</dbReference>
<dbReference type="FunFam" id="3.40.1280.10:FF:000007">
    <property type="entry name" value="Ribosomal RNA small subunit methyltransferase E"/>
    <property type="match status" value="1"/>
</dbReference>
<dbReference type="Gene3D" id="3.40.1280.10">
    <property type="match status" value="1"/>
</dbReference>
<dbReference type="Gene3D" id="2.40.240.20">
    <property type="entry name" value="Hypothetical PUA domain-like, domain 1"/>
    <property type="match status" value="1"/>
</dbReference>
<dbReference type="InterPro" id="IPR029028">
    <property type="entry name" value="Alpha/beta_knot_MTases"/>
</dbReference>
<dbReference type="InterPro" id="IPR015947">
    <property type="entry name" value="PUA-like_sf"/>
</dbReference>
<dbReference type="InterPro" id="IPR006700">
    <property type="entry name" value="RsmE"/>
</dbReference>
<dbReference type="InterPro" id="IPR046886">
    <property type="entry name" value="RsmE_MTase_dom"/>
</dbReference>
<dbReference type="InterPro" id="IPR046887">
    <property type="entry name" value="RsmE_PUA-like"/>
</dbReference>
<dbReference type="InterPro" id="IPR029026">
    <property type="entry name" value="tRNA_m1G_MTases_N"/>
</dbReference>
<dbReference type="NCBIfam" id="NF008690">
    <property type="entry name" value="PRK11713.1-1"/>
    <property type="match status" value="1"/>
</dbReference>
<dbReference type="NCBIfam" id="NF008692">
    <property type="entry name" value="PRK11713.1-5"/>
    <property type="match status" value="1"/>
</dbReference>
<dbReference type="NCBIfam" id="TIGR00046">
    <property type="entry name" value="RsmE family RNA methyltransferase"/>
    <property type="match status" value="1"/>
</dbReference>
<dbReference type="PANTHER" id="PTHR30027:SF3">
    <property type="entry name" value="16S RRNA (URACIL(1498)-N(3))-METHYLTRANSFERASE"/>
    <property type="match status" value="1"/>
</dbReference>
<dbReference type="PANTHER" id="PTHR30027">
    <property type="entry name" value="RIBOSOMAL RNA SMALL SUBUNIT METHYLTRANSFERASE E"/>
    <property type="match status" value="1"/>
</dbReference>
<dbReference type="Pfam" id="PF04452">
    <property type="entry name" value="Methyltrans_RNA"/>
    <property type="match status" value="1"/>
</dbReference>
<dbReference type="Pfam" id="PF20260">
    <property type="entry name" value="PUA_4"/>
    <property type="match status" value="1"/>
</dbReference>
<dbReference type="PIRSF" id="PIRSF015601">
    <property type="entry name" value="MTase_slr0722"/>
    <property type="match status" value="1"/>
</dbReference>
<dbReference type="SUPFAM" id="SSF75217">
    <property type="entry name" value="alpha/beta knot"/>
    <property type="match status" value="1"/>
</dbReference>
<dbReference type="SUPFAM" id="SSF88697">
    <property type="entry name" value="PUA domain-like"/>
    <property type="match status" value="1"/>
</dbReference>
<reference key="1">
    <citation type="journal article" date="2002" name="Proc. Natl. Acad. Sci. U.S.A.">
        <title>Extensive mosaic structure revealed by the complete genome sequence of uropathogenic Escherichia coli.</title>
        <authorList>
            <person name="Welch R.A."/>
            <person name="Burland V."/>
            <person name="Plunkett G. III"/>
            <person name="Redford P."/>
            <person name="Roesch P."/>
            <person name="Rasko D."/>
            <person name="Buckles E.L."/>
            <person name="Liou S.-R."/>
            <person name="Boutin A."/>
            <person name="Hackett J."/>
            <person name="Stroud D."/>
            <person name="Mayhew G.F."/>
            <person name="Rose D.J."/>
            <person name="Zhou S."/>
            <person name="Schwartz D.C."/>
            <person name="Perna N.T."/>
            <person name="Mobley H.L.T."/>
            <person name="Donnenberg M.S."/>
            <person name="Blattner F.R."/>
        </authorList>
    </citation>
    <scope>NUCLEOTIDE SEQUENCE [LARGE SCALE GENOMIC DNA]</scope>
    <source>
        <strain>CFT073 / ATCC 700928 / UPEC</strain>
    </source>
</reference>
<organism>
    <name type="scientific">Escherichia coli O6:H1 (strain CFT073 / ATCC 700928 / UPEC)</name>
    <dbReference type="NCBI Taxonomy" id="199310"/>
    <lineage>
        <taxon>Bacteria</taxon>
        <taxon>Pseudomonadati</taxon>
        <taxon>Pseudomonadota</taxon>
        <taxon>Gammaproteobacteria</taxon>
        <taxon>Enterobacterales</taxon>
        <taxon>Enterobacteriaceae</taxon>
        <taxon>Escherichia</taxon>
    </lineage>
</organism>
<accession>P0AGL8</accession>
<accession>P37912</accession>
<accession>P76647</accession>
<protein>
    <recommendedName>
        <fullName>Ribosomal RNA small subunit methyltransferase E</fullName>
        <ecNumber>2.1.1.193</ecNumber>
    </recommendedName>
    <alternativeName>
        <fullName>16S rRNA m3U1498 methyltransferase</fullName>
    </alternativeName>
</protein>
<name>RSME_ECOL6</name>
<gene>
    <name type="primary">rsmE</name>
    <name type="ordered locus">c3532</name>
</gene>
<comment type="function">
    <text evidence="1">Specifically methylates the N3 position of the uracil ring of uridine 1498 (m3U1498) in 16S rRNA. Acts on the fully assembled 30S ribosomal subunit (By similarity).</text>
</comment>
<comment type="catalytic activity">
    <reaction>
        <text>uridine(1498) in 16S rRNA + S-adenosyl-L-methionine = N(3)-methyluridine(1498) in 16S rRNA + S-adenosyl-L-homocysteine + H(+)</text>
        <dbReference type="Rhea" id="RHEA:42920"/>
        <dbReference type="Rhea" id="RHEA-COMP:10283"/>
        <dbReference type="Rhea" id="RHEA-COMP:10284"/>
        <dbReference type="ChEBI" id="CHEBI:15378"/>
        <dbReference type="ChEBI" id="CHEBI:57856"/>
        <dbReference type="ChEBI" id="CHEBI:59789"/>
        <dbReference type="ChEBI" id="CHEBI:65315"/>
        <dbReference type="ChEBI" id="CHEBI:74502"/>
        <dbReference type="EC" id="2.1.1.193"/>
    </reaction>
</comment>
<comment type="subunit">
    <text evidence="1">Homodimer.</text>
</comment>
<comment type="subcellular location">
    <subcellularLocation>
        <location evidence="1">Cytoplasm</location>
    </subcellularLocation>
</comment>
<comment type="similarity">
    <text evidence="2">Belongs to the RNA methyltransferase RsmE family.</text>
</comment>
<comment type="sequence caution" evidence="2">
    <conflict type="erroneous initiation">
        <sequence resource="EMBL-CDS" id="AAN81980"/>
    </conflict>
    <text>Extended N-terminus.</text>
</comment>
<sequence length="243" mass="26978">MRIPRIYHPEPLTSHSHIALCEDAANHIGRVLRMGPGQALQLFDGSNQVFDAEITSASKKSVEVKVLEGQIDDRESPLHIHLGQVMSRGEKMEFTIQKSIELGVSLITPLFSERCGVKLDSERLNKKLQQWQKIAIAACEQCGRNRVPEIRPAMDLEAWCAEQDEGLKLNLHPRASNSINTLPLPVERVRLLIGPEGGLSADEIAMTARYQFTDILLGPRVLRTETTALTAITALQVRFGDLG</sequence>
<feature type="chain" id="PRO_0000176200" description="Ribosomal RNA small subunit methyltransferase E">
    <location>
        <begin position="1"/>
        <end position="243"/>
    </location>
</feature>